<name>MNMA_SHEPC</name>
<proteinExistence type="inferred from homology"/>
<gene>
    <name evidence="1" type="primary">mnmA</name>
    <name type="synonym">trmU</name>
    <name type="ordered locus">Sputcn32_2233</name>
</gene>
<evidence type="ECO:0000255" key="1">
    <source>
        <dbReference type="HAMAP-Rule" id="MF_00144"/>
    </source>
</evidence>
<accession>A4Y7M1</accession>
<protein>
    <recommendedName>
        <fullName evidence="1">tRNA-specific 2-thiouridylase MnmA</fullName>
        <ecNumber evidence="1">2.8.1.13</ecNumber>
    </recommendedName>
</protein>
<comment type="function">
    <text evidence="1">Catalyzes the 2-thiolation of uridine at the wobble position (U34) of tRNA, leading to the formation of s(2)U34.</text>
</comment>
<comment type="catalytic activity">
    <reaction evidence="1">
        <text>S-sulfanyl-L-cysteinyl-[protein] + uridine(34) in tRNA + AH2 + ATP = 2-thiouridine(34) in tRNA + L-cysteinyl-[protein] + A + AMP + diphosphate + H(+)</text>
        <dbReference type="Rhea" id="RHEA:47032"/>
        <dbReference type="Rhea" id="RHEA-COMP:10131"/>
        <dbReference type="Rhea" id="RHEA-COMP:11726"/>
        <dbReference type="Rhea" id="RHEA-COMP:11727"/>
        <dbReference type="Rhea" id="RHEA-COMP:11728"/>
        <dbReference type="ChEBI" id="CHEBI:13193"/>
        <dbReference type="ChEBI" id="CHEBI:15378"/>
        <dbReference type="ChEBI" id="CHEBI:17499"/>
        <dbReference type="ChEBI" id="CHEBI:29950"/>
        <dbReference type="ChEBI" id="CHEBI:30616"/>
        <dbReference type="ChEBI" id="CHEBI:33019"/>
        <dbReference type="ChEBI" id="CHEBI:61963"/>
        <dbReference type="ChEBI" id="CHEBI:65315"/>
        <dbReference type="ChEBI" id="CHEBI:87170"/>
        <dbReference type="ChEBI" id="CHEBI:456215"/>
        <dbReference type="EC" id="2.8.1.13"/>
    </reaction>
</comment>
<comment type="subcellular location">
    <subcellularLocation>
        <location evidence="1">Cytoplasm</location>
    </subcellularLocation>
</comment>
<comment type="similarity">
    <text evidence="1">Belongs to the MnmA/TRMU family.</text>
</comment>
<reference key="1">
    <citation type="submission" date="2007-04" db="EMBL/GenBank/DDBJ databases">
        <title>Complete sequence of Shewanella putrefaciens CN-32.</title>
        <authorList>
            <consortium name="US DOE Joint Genome Institute"/>
            <person name="Copeland A."/>
            <person name="Lucas S."/>
            <person name="Lapidus A."/>
            <person name="Barry K."/>
            <person name="Detter J.C."/>
            <person name="Glavina del Rio T."/>
            <person name="Hammon N."/>
            <person name="Israni S."/>
            <person name="Dalin E."/>
            <person name="Tice H."/>
            <person name="Pitluck S."/>
            <person name="Chain P."/>
            <person name="Malfatti S."/>
            <person name="Shin M."/>
            <person name="Vergez L."/>
            <person name="Schmutz J."/>
            <person name="Larimer F."/>
            <person name="Land M."/>
            <person name="Hauser L."/>
            <person name="Kyrpides N."/>
            <person name="Mikhailova N."/>
            <person name="Romine M.F."/>
            <person name="Fredrickson J."/>
            <person name="Tiedje J."/>
            <person name="Richardson P."/>
        </authorList>
    </citation>
    <scope>NUCLEOTIDE SEQUENCE [LARGE SCALE GENOMIC DNA]</scope>
    <source>
        <strain>CN-32 / ATCC BAA-453</strain>
    </source>
</reference>
<organism>
    <name type="scientific">Shewanella putrefaciens (strain CN-32 / ATCC BAA-453)</name>
    <dbReference type="NCBI Taxonomy" id="319224"/>
    <lineage>
        <taxon>Bacteria</taxon>
        <taxon>Pseudomonadati</taxon>
        <taxon>Pseudomonadota</taxon>
        <taxon>Gammaproteobacteria</taxon>
        <taxon>Alteromonadales</taxon>
        <taxon>Shewanellaceae</taxon>
        <taxon>Shewanella</taxon>
    </lineage>
</organism>
<keyword id="KW-0067">ATP-binding</keyword>
<keyword id="KW-0963">Cytoplasm</keyword>
<keyword id="KW-1015">Disulfide bond</keyword>
<keyword id="KW-0547">Nucleotide-binding</keyword>
<keyword id="KW-0694">RNA-binding</keyword>
<keyword id="KW-0808">Transferase</keyword>
<keyword id="KW-0819">tRNA processing</keyword>
<keyword id="KW-0820">tRNA-binding</keyword>
<feature type="chain" id="PRO_1000009572" description="tRNA-specific 2-thiouridylase MnmA">
    <location>
        <begin position="1"/>
        <end position="372"/>
    </location>
</feature>
<feature type="region of interest" description="Interaction with target base in tRNA" evidence="1">
    <location>
        <begin position="102"/>
        <end position="104"/>
    </location>
</feature>
<feature type="region of interest" description="Interaction with tRNA" evidence="1">
    <location>
        <begin position="155"/>
        <end position="157"/>
    </location>
</feature>
<feature type="region of interest" description="Interaction with tRNA" evidence="1">
    <location>
        <begin position="317"/>
        <end position="318"/>
    </location>
</feature>
<feature type="active site" description="Nucleophile" evidence="1">
    <location>
        <position position="107"/>
    </location>
</feature>
<feature type="active site" description="Cysteine persulfide intermediate" evidence="1">
    <location>
        <position position="205"/>
    </location>
</feature>
<feature type="binding site" evidence="1">
    <location>
        <begin position="16"/>
        <end position="23"/>
    </location>
    <ligand>
        <name>ATP</name>
        <dbReference type="ChEBI" id="CHEBI:30616"/>
    </ligand>
</feature>
<feature type="binding site" evidence="1">
    <location>
        <position position="42"/>
    </location>
    <ligand>
        <name>ATP</name>
        <dbReference type="ChEBI" id="CHEBI:30616"/>
    </ligand>
</feature>
<feature type="binding site" evidence="1">
    <location>
        <position position="132"/>
    </location>
    <ligand>
        <name>ATP</name>
        <dbReference type="ChEBI" id="CHEBI:30616"/>
    </ligand>
</feature>
<feature type="site" description="Interaction with tRNA" evidence="1">
    <location>
        <position position="133"/>
    </location>
</feature>
<feature type="site" description="Interaction with tRNA" evidence="1">
    <location>
        <position position="350"/>
    </location>
</feature>
<feature type="disulfide bond" description="Alternate" evidence="1">
    <location>
        <begin position="107"/>
        <end position="205"/>
    </location>
</feature>
<dbReference type="EC" id="2.8.1.13" evidence="1"/>
<dbReference type="EMBL" id="CP000681">
    <property type="protein sequence ID" value="ABP75954.1"/>
    <property type="molecule type" value="Genomic_DNA"/>
</dbReference>
<dbReference type="SMR" id="A4Y7M1"/>
<dbReference type="STRING" id="319224.Sputcn32_2233"/>
<dbReference type="KEGG" id="spc:Sputcn32_2233"/>
<dbReference type="eggNOG" id="COG0482">
    <property type="taxonomic scope" value="Bacteria"/>
</dbReference>
<dbReference type="HOGENOM" id="CLU_035188_1_0_6"/>
<dbReference type="GO" id="GO:0005737">
    <property type="term" value="C:cytoplasm"/>
    <property type="evidence" value="ECO:0007669"/>
    <property type="project" value="UniProtKB-SubCell"/>
</dbReference>
<dbReference type="GO" id="GO:0005524">
    <property type="term" value="F:ATP binding"/>
    <property type="evidence" value="ECO:0007669"/>
    <property type="project" value="UniProtKB-KW"/>
</dbReference>
<dbReference type="GO" id="GO:0000049">
    <property type="term" value="F:tRNA binding"/>
    <property type="evidence" value="ECO:0007669"/>
    <property type="project" value="UniProtKB-KW"/>
</dbReference>
<dbReference type="GO" id="GO:0103016">
    <property type="term" value="F:tRNA-uridine 2-sulfurtransferase activity"/>
    <property type="evidence" value="ECO:0007669"/>
    <property type="project" value="UniProtKB-EC"/>
</dbReference>
<dbReference type="GO" id="GO:0002143">
    <property type="term" value="P:tRNA wobble position uridine thiolation"/>
    <property type="evidence" value="ECO:0007669"/>
    <property type="project" value="TreeGrafter"/>
</dbReference>
<dbReference type="CDD" id="cd01998">
    <property type="entry name" value="MnmA_TRMU-like"/>
    <property type="match status" value="1"/>
</dbReference>
<dbReference type="FunFam" id="2.30.30.280:FF:000001">
    <property type="entry name" value="tRNA-specific 2-thiouridylase MnmA"/>
    <property type="match status" value="1"/>
</dbReference>
<dbReference type="FunFam" id="2.40.30.10:FF:000023">
    <property type="entry name" value="tRNA-specific 2-thiouridylase MnmA"/>
    <property type="match status" value="1"/>
</dbReference>
<dbReference type="FunFam" id="3.40.50.620:FF:000004">
    <property type="entry name" value="tRNA-specific 2-thiouridylase MnmA"/>
    <property type="match status" value="1"/>
</dbReference>
<dbReference type="Gene3D" id="2.30.30.280">
    <property type="entry name" value="Adenine nucleotide alpha hydrolases-like domains"/>
    <property type="match status" value="1"/>
</dbReference>
<dbReference type="Gene3D" id="3.40.50.620">
    <property type="entry name" value="HUPs"/>
    <property type="match status" value="1"/>
</dbReference>
<dbReference type="Gene3D" id="2.40.30.10">
    <property type="entry name" value="Translation factors"/>
    <property type="match status" value="1"/>
</dbReference>
<dbReference type="HAMAP" id="MF_00144">
    <property type="entry name" value="tRNA_thiouridyl_MnmA"/>
    <property type="match status" value="1"/>
</dbReference>
<dbReference type="InterPro" id="IPR004506">
    <property type="entry name" value="MnmA-like"/>
</dbReference>
<dbReference type="InterPro" id="IPR046885">
    <property type="entry name" value="MnmA-like_C"/>
</dbReference>
<dbReference type="InterPro" id="IPR046884">
    <property type="entry name" value="MnmA-like_central"/>
</dbReference>
<dbReference type="InterPro" id="IPR023382">
    <property type="entry name" value="MnmA-like_central_sf"/>
</dbReference>
<dbReference type="InterPro" id="IPR014729">
    <property type="entry name" value="Rossmann-like_a/b/a_fold"/>
</dbReference>
<dbReference type="NCBIfam" id="NF001138">
    <property type="entry name" value="PRK00143.1"/>
    <property type="match status" value="1"/>
</dbReference>
<dbReference type="NCBIfam" id="TIGR00420">
    <property type="entry name" value="trmU"/>
    <property type="match status" value="1"/>
</dbReference>
<dbReference type="PANTHER" id="PTHR11933:SF5">
    <property type="entry name" value="MITOCHONDRIAL TRNA-SPECIFIC 2-THIOURIDYLASE 1"/>
    <property type="match status" value="1"/>
</dbReference>
<dbReference type="PANTHER" id="PTHR11933">
    <property type="entry name" value="TRNA 5-METHYLAMINOMETHYL-2-THIOURIDYLATE -METHYLTRANSFERASE"/>
    <property type="match status" value="1"/>
</dbReference>
<dbReference type="Pfam" id="PF03054">
    <property type="entry name" value="tRNA_Me_trans"/>
    <property type="match status" value="1"/>
</dbReference>
<dbReference type="Pfam" id="PF20258">
    <property type="entry name" value="tRNA_Me_trans_C"/>
    <property type="match status" value="1"/>
</dbReference>
<dbReference type="Pfam" id="PF20259">
    <property type="entry name" value="tRNA_Me_trans_M"/>
    <property type="match status" value="1"/>
</dbReference>
<dbReference type="SUPFAM" id="SSF52402">
    <property type="entry name" value="Adenine nucleotide alpha hydrolases-like"/>
    <property type="match status" value="1"/>
</dbReference>
<sequence length="372" mass="41721">MTSIEPTHTGKKVIVGMSGGVDSSVSAYLLMQQGYQVEGLFMKNWEEDDNNEYCAAAEDLKDAQAVCDKLGIKLHTVNFAAEYWDNVFEYFLAEYKAGRTPNPDIMCNKEIKFKAFLEFADEILDADYIAMGHYVRRRDNSDGSTQMLRGVDGNKDQSYFLYTLSHEQVARSLFPVGELEKHQVREIAKEMGLITHDKKDSTGICFIGERKFTEFLRTYLPAQPGNIETPEGEVIGTHQGLMYHTLGQRKGLGIGGMKNSNDDPWYVVDKDLERNVLIVGQGGHHPRLMSTGMTVNQLHWVDRTGPVDGCHITVKTRYRQQDVPCTLTYTDEHTLRVVFDEPVAAVTPGQSAVFYDGEVCLGGGIIDQLIRG</sequence>